<dbReference type="EMBL" id="AM406670">
    <property type="protein sequence ID" value="CAL94294.1"/>
    <property type="status" value="ALT_INIT"/>
    <property type="molecule type" value="Genomic_DNA"/>
</dbReference>
<dbReference type="RefSeq" id="WP_050976110.1">
    <property type="nucleotide sequence ID" value="NC_008702.1"/>
</dbReference>
<dbReference type="STRING" id="62928.azo1677"/>
<dbReference type="KEGG" id="aoa:dqs_1827"/>
<dbReference type="KEGG" id="azo:azo1677"/>
<dbReference type="eggNOG" id="ENOG50330SG">
    <property type="taxonomic scope" value="Bacteria"/>
</dbReference>
<dbReference type="HOGENOM" id="CLU_149349_0_0_4"/>
<dbReference type="Proteomes" id="UP000002588">
    <property type="component" value="Chromosome"/>
</dbReference>
<dbReference type="GO" id="GO:0009399">
    <property type="term" value="P:nitrogen fixation"/>
    <property type="evidence" value="ECO:0007669"/>
    <property type="project" value="UniProtKB-UniRule"/>
</dbReference>
<dbReference type="HAMAP" id="MF_02117">
    <property type="entry name" value="CowN"/>
    <property type="match status" value="1"/>
</dbReference>
<dbReference type="InterPro" id="IPR024899">
    <property type="entry name" value="CowN"/>
</dbReference>
<dbReference type="NCBIfam" id="NF033689">
    <property type="entry name" value="N2Fix_CO_CowN"/>
    <property type="match status" value="1"/>
</dbReference>
<dbReference type="Pfam" id="PF20543">
    <property type="entry name" value="CowN"/>
    <property type="match status" value="1"/>
</dbReference>
<proteinExistence type="inferred from homology"/>
<feature type="chain" id="PRO_0000407249" description="N(2)-fixation sustaining protein CowN">
    <location>
        <begin position="1"/>
        <end position="113"/>
    </location>
</feature>
<sequence>MNAPDPRDQLARPLNNPFAEALDKPDRYVSFCGIDCDGNARILMQHIRRHIDDPTKGNAFWDKFRDKLEGRSSERCDELFLVHSYINMIRELFETYEDDDALALLQKIEEECC</sequence>
<evidence type="ECO:0000255" key="1">
    <source>
        <dbReference type="HAMAP-Rule" id="MF_02117"/>
    </source>
</evidence>
<evidence type="ECO:0000305" key="2"/>
<name>COWN_AZOSB</name>
<protein>
    <recommendedName>
        <fullName evidence="1">N(2)-fixation sustaining protein CowN</fullName>
    </recommendedName>
    <alternativeName>
        <fullName evidence="1">CO weal-nitrogenase</fullName>
    </alternativeName>
</protein>
<accession>A1K639</accession>
<comment type="function">
    <text evidence="1">Is required to sustain N(2)-dependent growth in the presence of low levels of carbon monoxide (CO). Probably acts by protecting the N(2) fixation ability of the nitrogenase complex, which is inactivated in the presence of CO.</text>
</comment>
<comment type="similarity">
    <text evidence="1">Belongs to the CowN family.</text>
</comment>
<comment type="sequence caution" evidence="2">
    <conflict type="erroneous initiation">
        <sequence resource="EMBL-CDS" id="CAL94294"/>
    </conflict>
    <text>Extended N-terminus.</text>
</comment>
<organism>
    <name type="scientific">Azoarcus sp. (strain BH72)</name>
    <dbReference type="NCBI Taxonomy" id="418699"/>
    <lineage>
        <taxon>Bacteria</taxon>
        <taxon>Pseudomonadati</taxon>
        <taxon>Pseudomonadota</taxon>
        <taxon>Betaproteobacteria</taxon>
        <taxon>Rhodocyclales</taxon>
        <taxon>Zoogloeaceae</taxon>
        <taxon>Azoarcus</taxon>
    </lineage>
</organism>
<reference key="1">
    <citation type="journal article" date="2006" name="Nat. Biotechnol.">
        <title>Complete genome of the mutualistic, N2-fixing grass endophyte Azoarcus sp. strain BH72.</title>
        <authorList>
            <person name="Krause A."/>
            <person name="Ramakumar A."/>
            <person name="Bartels D."/>
            <person name="Battistoni F."/>
            <person name="Bekel T."/>
            <person name="Boch J."/>
            <person name="Boehm M."/>
            <person name="Friedrich F."/>
            <person name="Hurek T."/>
            <person name="Krause L."/>
            <person name="Linke B."/>
            <person name="McHardy A.C."/>
            <person name="Sarkar A."/>
            <person name="Schneiker S."/>
            <person name="Syed A.A."/>
            <person name="Thauer R."/>
            <person name="Vorhoelter F.-J."/>
            <person name="Weidner S."/>
            <person name="Puehler A."/>
            <person name="Reinhold-Hurek B."/>
            <person name="Kaiser O."/>
            <person name="Goesmann A."/>
        </authorList>
    </citation>
    <scope>NUCLEOTIDE SEQUENCE [LARGE SCALE GENOMIC DNA]</scope>
    <source>
        <strain>BH72</strain>
    </source>
</reference>
<gene>
    <name evidence="1" type="primary">cowN</name>
    <name type="ordered locus">azo1677</name>
</gene>
<keyword id="KW-0535">Nitrogen fixation</keyword>
<keyword id="KW-1185">Reference proteome</keyword>